<comment type="function">
    <text evidence="1">This protein is located at the 30S-50S ribosomal subunit interface and may play a role in the structure and function of the aminoacyl-tRNA binding site.</text>
</comment>
<comment type="similarity">
    <text evidence="1">Belongs to the bacterial ribosomal protein bL19 family.</text>
</comment>
<accession>Q2FZ42</accession>
<dbReference type="EMBL" id="CP000253">
    <property type="protein sequence ID" value="ABD30316.1"/>
    <property type="molecule type" value="Genomic_DNA"/>
</dbReference>
<dbReference type="RefSeq" id="WP_000181404.1">
    <property type="nucleotide sequence ID" value="NZ_LS483365.1"/>
</dbReference>
<dbReference type="RefSeq" id="YP_499748.1">
    <property type="nucleotide sequence ID" value="NC_007795.1"/>
</dbReference>
<dbReference type="PDB" id="4WCE">
    <property type="method" value="X-ray"/>
    <property type="resolution" value="3.53 A"/>
    <property type="chains" value="M=1-116"/>
</dbReference>
<dbReference type="PDB" id="4WF9">
    <property type="method" value="X-ray"/>
    <property type="resolution" value="3.43 A"/>
    <property type="chains" value="M=1-116"/>
</dbReference>
<dbReference type="PDB" id="4WFA">
    <property type="method" value="X-ray"/>
    <property type="resolution" value="3.39 A"/>
    <property type="chains" value="M=1-116"/>
</dbReference>
<dbReference type="PDB" id="4WFB">
    <property type="method" value="X-ray"/>
    <property type="resolution" value="3.43 A"/>
    <property type="chains" value="M=1-116"/>
</dbReference>
<dbReference type="PDB" id="5HKV">
    <property type="method" value="X-ray"/>
    <property type="resolution" value="3.66 A"/>
    <property type="chains" value="M=1-116"/>
</dbReference>
<dbReference type="PDB" id="5HL7">
    <property type="method" value="X-ray"/>
    <property type="resolution" value="3.55 A"/>
    <property type="chains" value="M=1-116"/>
</dbReference>
<dbReference type="PDB" id="5LI0">
    <property type="method" value="EM"/>
    <property type="resolution" value="3.80 A"/>
    <property type="chains" value="S=1-110"/>
</dbReference>
<dbReference type="PDB" id="5ND8">
    <property type="method" value="EM"/>
    <property type="resolution" value="3.70 A"/>
    <property type="chains" value="S=1-116"/>
</dbReference>
<dbReference type="PDB" id="5ND9">
    <property type="method" value="EM"/>
    <property type="resolution" value="3.70 A"/>
    <property type="chains" value="S=1-116"/>
</dbReference>
<dbReference type="PDB" id="5NRG">
    <property type="method" value="X-ray"/>
    <property type="resolution" value="3.44 A"/>
    <property type="chains" value="M=1-116"/>
</dbReference>
<dbReference type="PDB" id="5TCU">
    <property type="method" value="EM"/>
    <property type="resolution" value="3.90 A"/>
    <property type="chains" value="L1=2-110"/>
</dbReference>
<dbReference type="PDB" id="6DDD">
    <property type="method" value="EM"/>
    <property type="resolution" value="3.10 A"/>
    <property type="chains" value="A=1-116"/>
</dbReference>
<dbReference type="PDB" id="6DDG">
    <property type="method" value="EM"/>
    <property type="resolution" value="3.10 A"/>
    <property type="chains" value="A=1-116"/>
</dbReference>
<dbReference type="PDB" id="6HMA">
    <property type="method" value="EM"/>
    <property type="resolution" value="2.65 A"/>
    <property type="chains" value="N=1-116"/>
</dbReference>
<dbReference type="PDB" id="6SJ6">
    <property type="method" value="EM"/>
    <property type="resolution" value="3.23 A"/>
    <property type="chains" value="S=1-116"/>
</dbReference>
<dbReference type="PDB" id="6WQN">
    <property type="method" value="EM"/>
    <property type="resolution" value="2.90 A"/>
    <property type="chains" value="A=1-116"/>
</dbReference>
<dbReference type="PDB" id="6WQQ">
    <property type="method" value="EM"/>
    <property type="resolution" value="3.10 A"/>
    <property type="chains" value="A=1-116"/>
</dbReference>
<dbReference type="PDB" id="6WRS">
    <property type="method" value="EM"/>
    <property type="resolution" value="3.20 A"/>
    <property type="chains" value="A=1-116"/>
</dbReference>
<dbReference type="PDB" id="6WRU">
    <property type="method" value="EM"/>
    <property type="resolution" value="3.10 A"/>
    <property type="chains" value="A=1-116"/>
</dbReference>
<dbReference type="PDB" id="6YEF">
    <property type="method" value="EM"/>
    <property type="resolution" value="3.20 A"/>
    <property type="chains" value="S=1-116"/>
</dbReference>
<dbReference type="PDB" id="7ASM">
    <property type="method" value="EM"/>
    <property type="resolution" value="2.48 A"/>
    <property type="chains" value="N=2-115"/>
</dbReference>
<dbReference type="PDB" id="7ASN">
    <property type="method" value="EM"/>
    <property type="resolution" value="2.73 A"/>
    <property type="chains" value="N=2-115"/>
</dbReference>
<dbReference type="PDB" id="7NHL">
    <property type="method" value="EM"/>
    <property type="resolution" value="3.10 A"/>
    <property type="chains" value="S=1-116"/>
</dbReference>
<dbReference type="PDB" id="7NHM">
    <property type="method" value="EM"/>
    <property type="resolution" value="3.10 A"/>
    <property type="chains" value="S=1-116"/>
</dbReference>
<dbReference type="PDB" id="7TTU">
    <property type="method" value="EM"/>
    <property type="resolution" value="3.00 A"/>
    <property type="chains" value="A=1-116"/>
</dbReference>
<dbReference type="PDB" id="7TTW">
    <property type="method" value="EM"/>
    <property type="resolution" value="2.90 A"/>
    <property type="chains" value="A=1-116"/>
</dbReference>
<dbReference type="PDB" id="8P2F">
    <property type="method" value="EM"/>
    <property type="resolution" value="2.44 A"/>
    <property type="chains" value="S=1-116"/>
</dbReference>
<dbReference type="PDB" id="8P2G">
    <property type="method" value="EM"/>
    <property type="resolution" value="2.02 A"/>
    <property type="chains" value="S=1-116"/>
</dbReference>
<dbReference type="PDB" id="8P2H">
    <property type="method" value="EM"/>
    <property type="resolution" value="2.49 A"/>
    <property type="chains" value="S=1-116"/>
</dbReference>
<dbReference type="PDBsum" id="4WCE"/>
<dbReference type="PDBsum" id="4WF9"/>
<dbReference type="PDBsum" id="4WFA"/>
<dbReference type="PDBsum" id="4WFB"/>
<dbReference type="PDBsum" id="5HKV"/>
<dbReference type="PDBsum" id="5HL7"/>
<dbReference type="PDBsum" id="5LI0"/>
<dbReference type="PDBsum" id="5ND8"/>
<dbReference type="PDBsum" id="5ND9"/>
<dbReference type="PDBsum" id="5NRG"/>
<dbReference type="PDBsum" id="5TCU"/>
<dbReference type="PDBsum" id="6DDD"/>
<dbReference type="PDBsum" id="6DDG"/>
<dbReference type="PDBsum" id="6HMA"/>
<dbReference type="PDBsum" id="6SJ6"/>
<dbReference type="PDBsum" id="6WQN"/>
<dbReference type="PDBsum" id="6WQQ"/>
<dbReference type="PDBsum" id="6WRS"/>
<dbReference type="PDBsum" id="6WRU"/>
<dbReference type="PDBsum" id="6YEF"/>
<dbReference type="PDBsum" id="7ASM"/>
<dbReference type="PDBsum" id="7ASN"/>
<dbReference type="PDBsum" id="7NHL"/>
<dbReference type="PDBsum" id="7NHM"/>
<dbReference type="PDBsum" id="7TTU"/>
<dbReference type="PDBsum" id="7TTW"/>
<dbReference type="PDBsum" id="8P2F"/>
<dbReference type="PDBsum" id="8P2G"/>
<dbReference type="PDBsum" id="8P2H"/>
<dbReference type="EMDB" id="EMD-10212"/>
<dbReference type="EMDB" id="EMD-10791"/>
<dbReference type="EMDB" id="EMD-12332"/>
<dbReference type="EMDB" id="EMD-12333"/>
<dbReference type="EMDB" id="EMD-17363"/>
<dbReference type="EMDB" id="EMD-17364"/>
<dbReference type="EMDB" id="EMD-17365"/>
<dbReference type="EMDB" id="EMD-3624"/>
<dbReference type="EMDB" id="EMD-3625"/>
<dbReference type="EMDB" id="EMD-4050"/>
<dbReference type="EMDB" id="EMD-8402"/>
<dbReference type="SMR" id="Q2FZ42"/>
<dbReference type="IntAct" id="Q2FZ42">
    <property type="interactions" value="1"/>
</dbReference>
<dbReference type="STRING" id="93061.SAOUHSC_01211"/>
<dbReference type="PaxDb" id="1280-SAXN108_1242"/>
<dbReference type="GeneID" id="3919477"/>
<dbReference type="GeneID" id="98345556"/>
<dbReference type="KEGG" id="sao:SAOUHSC_01211"/>
<dbReference type="PATRIC" id="fig|93061.5.peg.1111"/>
<dbReference type="eggNOG" id="COG0335">
    <property type="taxonomic scope" value="Bacteria"/>
</dbReference>
<dbReference type="HOGENOM" id="CLU_103507_2_1_9"/>
<dbReference type="OrthoDB" id="9803541at2"/>
<dbReference type="EvolutionaryTrace" id="Q2FZ42"/>
<dbReference type="PRO" id="PR:Q2FZ42"/>
<dbReference type="Proteomes" id="UP000008816">
    <property type="component" value="Chromosome"/>
</dbReference>
<dbReference type="GO" id="GO:0022625">
    <property type="term" value="C:cytosolic large ribosomal subunit"/>
    <property type="evidence" value="ECO:0000318"/>
    <property type="project" value="GO_Central"/>
</dbReference>
<dbReference type="GO" id="GO:0003735">
    <property type="term" value="F:structural constituent of ribosome"/>
    <property type="evidence" value="ECO:0000318"/>
    <property type="project" value="GO_Central"/>
</dbReference>
<dbReference type="GO" id="GO:0006412">
    <property type="term" value="P:translation"/>
    <property type="evidence" value="ECO:0007669"/>
    <property type="project" value="UniProtKB-UniRule"/>
</dbReference>
<dbReference type="FunFam" id="2.30.30.790:FF:000001">
    <property type="entry name" value="50S ribosomal protein L19"/>
    <property type="match status" value="1"/>
</dbReference>
<dbReference type="Gene3D" id="2.30.30.790">
    <property type="match status" value="1"/>
</dbReference>
<dbReference type="HAMAP" id="MF_00402">
    <property type="entry name" value="Ribosomal_bL19"/>
    <property type="match status" value="1"/>
</dbReference>
<dbReference type="InterPro" id="IPR001857">
    <property type="entry name" value="Ribosomal_bL19"/>
</dbReference>
<dbReference type="InterPro" id="IPR018257">
    <property type="entry name" value="Ribosomal_bL19_CS"/>
</dbReference>
<dbReference type="InterPro" id="IPR038657">
    <property type="entry name" value="Ribosomal_bL19_sf"/>
</dbReference>
<dbReference type="InterPro" id="IPR008991">
    <property type="entry name" value="Translation_prot_SH3-like_sf"/>
</dbReference>
<dbReference type="NCBIfam" id="TIGR01024">
    <property type="entry name" value="rplS_bact"/>
    <property type="match status" value="1"/>
</dbReference>
<dbReference type="PANTHER" id="PTHR15680:SF9">
    <property type="entry name" value="LARGE RIBOSOMAL SUBUNIT PROTEIN BL19M"/>
    <property type="match status" value="1"/>
</dbReference>
<dbReference type="PANTHER" id="PTHR15680">
    <property type="entry name" value="RIBOSOMAL PROTEIN L19"/>
    <property type="match status" value="1"/>
</dbReference>
<dbReference type="Pfam" id="PF01245">
    <property type="entry name" value="Ribosomal_L19"/>
    <property type="match status" value="1"/>
</dbReference>
<dbReference type="PIRSF" id="PIRSF002191">
    <property type="entry name" value="Ribosomal_L19"/>
    <property type="match status" value="1"/>
</dbReference>
<dbReference type="PRINTS" id="PR00061">
    <property type="entry name" value="RIBOSOMALL19"/>
</dbReference>
<dbReference type="SUPFAM" id="SSF50104">
    <property type="entry name" value="Translation proteins SH3-like domain"/>
    <property type="match status" value="1"/>
</dbReference>
<dbReference type="PROSITE" id="PS01015">
    <property type="entry name" value="RIBOSOMAL_L19"/>
    <property type="match status" value="1"/>
</dbReference>
<protein>
    <recommendedName>
        <fullName evidence="1">Large ribosomal subunit protein bL19</fullName>
    </recommendedName>
    <alternativeName>
        <fullName evidence="2">50S ribosomal protein L19</fullName>
    </alternativeName>
</protein>
<gene>
    <name evidence="1" type="primary">rplS</name>
    <name type="ordered locus">SAOUHSC_01211</name>
</gene>
<name>RL19_STAA8</name>
<evidence type="ECO:0000255" key="1">
    <source>
        <dbReference type="HAMAP-Rule" id="MF_00402"/>
    </source>
</evidence>
<evidence type="ECO:0000305" key="2"/>
<evidence type="ECO:0007829" key="3">
    <source>
        <dbReference type="PDB" id="4WF9"/>
    </source>
</evidence>
<evidence type="ECO:0007829" key="4">
    <source>
        <dbReference type="PDB" id="6WQN"/>
    </source>
</evidence>
<evidence type="ECO:0007829" key="5">
    <source>
        <dbReference type="PDB" id="7ASM"/>
    </source>
</evidence>
<organism>
    <name type="scientific">Staphylococcus aureus (strain NCTC 8325 / PS 47)</name>
    <dbReference type="NCBI Taxonomy" id="93061"/>
    <lineage>
        <taxon>Bacteria</taxon>
        <taxon>Bacillati</taxon>
        <taxon>Bacillota</taxon>
        <taxon>Bacilli</taxon>
        <taxon>Bacillales</taxon>
        <taxon>Staphylococcaceae</taxon>
        <taxon>Staphylococcus</taxon>
    </lineage>
</organism>
<sequence>MTNHKLIEAVTKSQLRTDLPSFRPGDTLRVHVRIIEGTRERIQVFEGVVIKRRGGGVSETFTVRKISSGVGVERTFPLHTPKIEKIEVKRRGKVRRAKLYYLRSLRGKAARIQEIR</sequence>
<keyword id="KW-0002">3D-structure</keyword>
<keyword id="KW-1185">Reference proteome</keyword>
<keyword id="KW-0687">Ribonucleoprotein</keyword>
<keyword id="KW-0689">Ribosomal protein</keyword>
<proteinExistence type="evidence at protein level"/>
<reference key="1">
    <citation type="book" date="2006" name="Gram positive pathogens, 2nd edition">
        <title>The Staphylococcus aureus NCTC 8325 genome.</title>
        <editorList>
            <person name="Fischetti V."/>
            <person name="Novick R."/>
            <person name="Ferretti J."/>
            <person name="Portnoy D."/>
            <person name="Rood J."/>
        </editorList>
        <authorList>
            <person name="Gillaspy A.F."/>
            <person name="Worrell V."/>
            <person name="Orvis J."/>
            <person name="Roe B.A."/>
            <person name="Dyer D.W."/>
            <person name="Iandolo J.J."/>
        </authorList>
    </citation>
    <scope>NUCLEOTIDE SEQUENCE [LARGE SCALE GENOMIC DNA]</scope>
    <source>
        <strain>NCTC 8325 / PS 47</strain>
    </source>
</reference>
<feature type="chain" id="PRO_0000252546" description="Large ribosomal subunit protein bL19">
    <location>
        <begin position="1"/>
        <end position="116"/>
    </location>
</feature>
<feature type="helix" evidence="5">
    <location>
        <begin position="5"/>
        <end position="11"/>
    </location>
</feature>
<feature type="helix" evidence="5">
    <location>
        <begin position="12"/>
        <end position="14"/>
    </location>
</feature>
<feature type="strand" evidence="5">
    <location>
        <begin position="27"/>
        <end position="35"/>
    </location>
</feature>
<feature type="strand" evidence="4">
    <location>
        <begin position="37"/>
        <end position="39"/>
    </location>
</feature>
<feature type="strand" evidence="5">
    <location>
        <begin position="40"/>
        <end position="53"/>
    </location>
</feature>
<feature type="helix" evidence="5">
    <location>
        <begin position="56"/>
        <end position="58"/>
    </location>
</feature>
<feature type="strand" evidence="5">
    <location>
        <begin position="60"/>
        <end position="77"/>
    </location>
</feature>
<feature type="strand" evidence="5">
    <location>
        <begin position="83"/>
        <end position="90"/>
    </location>
</feature>
<feature type="strand" evidence="5">
    <location>
        <begin position="95"/>
        <end position="97"/>
    </location>
</feature>
<feature type="helix" evidence="5">
    <location>
        <begin position="100"/>
        <end position="103"/>
    </location>
</feature>
<feature type="strand" evidence="3">
    <location>
        <begin position="104"/>
        <end position="106"/>
    </location>
</feature>
<feature type="helix" evidence="5">
    <location>
        <begin position="107"/>
        <end position="109"/>
    </location>
</feature>